<proteinExistence type="inferred from homology"/>
<reference key="1">
    <citation type="journal article" date="2004" name="Proc. Natl. Acad. Sci. U.S.A.">
        <title>Structural flexibility in the Burkholderia mallei genome.</title>
        <authorList>
            <person name="Nierman W.C."/>
            <person name="DeShazer D."/>
            <person name="Kim H.S."/>
            <person name="Tettelin H."/>
            <person name="Nelson K.E."/>
            <person name="Feldblyum T.V."/>
            <person name="Ulrich R.L."/>
            <person name="Ronning C.M."/>
            <person name="Brinkac L.M."/>
            <person name="Daugherty S.C."/>
            <person name="Davidsen T.D."/>
            <person name="DeBoy R.T."/>
            <person name="Dimitrov G."/>
            <person name="Dodson R.J."/>
            <person name="Durkin A.S."/>
            <person name="Gwinn M.L."/>
            <person name="Haft D.H."/>
            <person name="Khouri H.M."/>
            <person name="Kolonay J.F."/>
            <person name="Madupu R."/>
            <person name="Mohammoud Y."/>
            <person name="Nelson W.C."/>
            <person name="Radune D."/>
            <person name="Romero C.M."/>
            <person name="Sarria S."/>
            <person name="Selengut J."/>
            <person name="Shamblin C."/>
            <person name="Sullivan S.A."/>
            <person name="White O."/>
            <person name="Yu Y."/>
            <person name="Zafar N."/>
            <person name="Zhou L."/>
            <person name="Fraser C.M."/>
        </authorList>
    </citation>
    <scope>NUCLEOTIDE SEQUENCE [LARGE SCALE GENOMIC DNA]</scope>
    <source>
        <strain>ATCC 23344</strain>
    </source>
</reference>
<feature type="chain" id="PRO_1000115110" description="Large ribosomal subunit protein bL33">
    <location>
        <begin position="1"/>
        <end position="55"/>
    </location>
</feature>
<feature type="region of interest" description="Disordered" evidence="2">
    <location>
        <begin position="1"/>
        <end position="24"/>
    </location>
</feature>
<feature type="compositionally biased region" description="Basic and acidic residues" evidence="2">
    <location>
        <begin position="1"/>
        <end position="11"/>
    </location>
</feature>
<feature type="compositionally biased region" description="Polar residues" evidence="2">
    <location>
        <begin position="14"/>
        <end position="24"/>
    </location>
</feature>
<gene>
    <name evidence="1" type="primary">rpmG</name>
    <name type="ordered locus">BMA2232</name>
</gene>
<organism>
    <name type="scientific">Burkholderia mallei (strain ATCC 23344)</name>
    <dbReference type="NCBI Taxonomy" id="243160"/>
    <lineage>
        <taxon>Bacteria</taxon>
        <taxon>Pseudomonadati</taxon>
        <taxon>Pseudomonadota</taxon>
        <taxon>Betaproteobacteria</taxon>
        <taxon>Burkholderiales</taxon>
        <taxon>Burkholderiaceae</taxon>
        <taxon>Burkholderia</taxon>
        <taxon>pseudomallei group</taxon>
    </lineage>
</organism>
<name>RL33_BURMA</name>
<comment type="similarity">
    <text evidence="1">Belongs to the bacterial ribosomal protein bL33 family.</text>
</comment>
<accession>Q62HM4</accession>
<protein>
    <recommendedName>
        <fullName evidence="1">Large ribosomal subunit protein bL33</fullName>
    </recommendedName>
    <alternativeName>
        <fullName evidence="3">50S ribosomal protein L33</fullName>
    </alternativeName>
</protein>
<dbReference type="EMBL" id="CP000010">
    <property type="protein sequence ID" value="AAU50255.1"/>
    <property type="molecule type" value="Genomic_DNA"/>
</dbReference>
<dbReference type="RefSeq" id="WP_004185395.1">
    <property type="nucleotide sequence ID" value="NC_006348.1"/>
</dbReference>
<dbReference type="RefSeq" id="YP_103796.1">
    <property type="nucleotide sequence ID" value="NC_006348.1"/>
</dbReference>
<dbReference type="SMR" id="Q62HM4"/>
<dbReference type="GeneID" id="95550920"/>
<dbReference type="KEGG" id="bma:BMA2232"/>
<dbReference type="PATRIC" id="fig|243160.12.peg.2296"/>
<dbReference type="eggNOG" id="COG0267">
    <property type="taxonomic scope" value="Bacteria"/>
</dbReference>
<dbReference type="HOGENOM" id="CLU_190949_1_1_4"/>
<dbReference type="PRO" id="PR:Q62HM4"/>
<dbReference type="Proteomes" id="UP000006693">
    <property type="component" value="Chromosome 1"/>
</dbReference>
<dbReference type="GO" id="GO:0022625">
    <property type="term" value="C:cytosolic large ribosomal subunit"/>
    <property type="evidence" value="ECO:0007669"/>
    <property type="project" value="TreeGrafter"/>
</dbReference>
<dbReference type="GO" id="GO:0003735">
    <property type="term" value="F:structural constituent of ribosome"/>
    <property type="evidence" value="ECO:0007669"/>
    <property type="project" value="InterPro"/>
</dbReference>
<dbReference type="GO" id="GO:0006412">
    <property type="term" value="P:translation"/>
    <property type="evidence" value="ECO:0007669"/>
    <property type="project" value="UniProtKB-UniRule"/>
</dbReference>
<dbReference type="FunFam" id="2.20.28.120:FF:000001">
    <property type="entry name" value="50S ribosomal protein L33"/>
    <property type="match status" value="1"/>
</dbReference>
<dbReference type="Gene3D" id="2.20.28.120">
    <property type="entry name" value="Ribosomal protein L33"/>
    <property type="match status" value="1"/>
</dbReference>
<dbReference type="HAMAP" id="MF_00294">
    <property type="entry name" value="Ribosomal_bL33"/>
    <property type="match status" value="1"/>
</dbReference>
<dbReference type="InterPro" id="IPR001705">
    <property type="entry name" value="Ribosomal_bL33"/>
</dbReference>
<dbReference type="InterPro" id="IPR018264">
    <property type="entry name" value="Ribosomal_bL33_CS"/>
</dbReference>
<dbReference type="InterPro" id="IPR038584">
    <property type="entry name" value="Ribosomal_bL33_sf"/>
</dbReference>
<dbReference type="InterPro" id="IPR011332">
    <property type="entry name" value="Ribosomal_zn-bd"/>
</dbReference>
<dbReference type="NCBIfam" id="NF001860">
    <property type="entry name" value="PRK00595.1"/>
    <property type="match status" value="1"/>
</dbReference>
<dbReference type="NCBIfam" id="TIGR01023">
    <property type="entry name" value="rpmG_bact"/>
    <property type="match status" value="1"/>
</dbReference>
<dbReference type="PANTHER" id="PTHR15238">
    <property type="entry name" value="54S RIBOSOMAL PROTEIN L39, MITOCHONDRIAL"/>
    <property type="match status" value="1"/>
</dbReference>
<dbReference type="PANTHER" id="PTHR15238:SF1">
    <property type="entry name" value="LARGE RIBOSOMAL SUBUNIT PROTEIN BL33M"/>
    <property type="match status" value="1"/>
</dbReference>
<dbReference type="Pfam" id="PF00471">
    <property type="entry name" value="Ribosomal_L33"/>
    <property type="match status" value="1"/>
</dbReference>
<dbReference type="SUPFAM" id="SSF57829">
    <property type="entry name" value="Zn-binding ribosomal proteins"/>
    <property type="match status" value="1"/>
</dbReference>
<dbReference type="PROSITE" id="PS00582">
    <property type="entry name" value="RIBOSOMAL_L33"/>
    <property type="match status" value="1"/>
</dbReference>
<keyword id="KW-1185">Reference proteome</keyword>
<keyword id="KW-0687">Ribonucleoprotein</keyword>
<keyword id="KW-0689">Ribosomal protein</keyword>
<evidence type="ECO:0000255" key="1">
    <source>
        <dbReference type="HAMAP-Rule" id="MF_00294"/>
    </source>
</evidence>
<evidence type="ECO:0000256" key="2">
    <source>
        <dbReference type="SAM" id="MobiDB-lite"/>
    </source>
</evidence>
<evidence type="ECO:0000305" key="3"/>
<sequence length="55" mass="6356">MAKGARDKIKLESTAGTGHFYTTTKNKRNMPEKMEIMKFDPVARKHVAYKETKIK</sequence>